<comment type="function">
    <text evidence="1 4 5">Essential component of the nuclear pore complex (By similarity). The N-terminal is probably involved in nucleocytoplasmic transport (By similarity). The C-terminal is involved in protein-protein interaction probably via coiled-coil formation, promotes its association with centrosomes and may function in anchorage of Nup62 to the pore complex (By similarity). Binds to transcriptionally active genes (PubMed:20144760). Negatively regulates chromatin attachment to the nuclear envelope, probably by preventing chromatin tethering by Nup154 (PubMed:26341556).</text>
</comment>
<comment type="subcellular location">
    <subcellularLocation>
        <location evidence="4 5">Nucleus</location>
    </subcellularLocation>
    <subcellularLocation>
        <location evidence="4">Chromosome</location>
    </subcellularLocation>
    <subcellularLocation>
        <location evidence="5">Nucleus envelope</location>
    </subcellularLocation>
    <subcellularLocation>
        <location evidence="6">Nucleus</location>
        <location evidence="6">Nuclear pore complex</location>
    </subcellularLocation>
    <subcellularLocation>
        <location evidence="1">Cytoplasm</location>
        <location evidence="1">Cytoskeleton</location>
        <location evidence="1">Spindle pole</location>
    </subcellularLocation>
    <subcellularLocation>
        <location evidence="1">Cytoplasm</location>
        <location evidence="1">Cytoskeleton</location>
        <location evidence="1">Microtubule organizing center</location>
        <location evidence="1">Centrosome</location>
    </subcellularLocation>
    <text evidence="1 4">Central region of the nuclear pore, within the transporter (By similarity). Associates with chromatin (PubMed:20144760).</text>
</comment>
<comment type="tissue specificity">
    <text evidence="6">Expressed in adult male accessory glands (at protein level).</text>
</comment>
<comment type="domain">
    <text evidence="7">Contains FG repeats. FG repeats are interaction sites for karyopherins (importins, exportins) and form probably an affinity gradient, guiding the transport proteins unidirectionally with their cargo through the NPC. FG repeat regions are highly flexible and lack ordered secondary structure. The overall conservation of FG repeats regarding exact sequence, spacing, and repeat unit length is limited.</text>
</comment>
<comment type="disruption phenotype">
    <text evidence="5">RNAi-mediated knockdown in oocytes results in increased nuclear size. RNAi-mediated knockdown in oocytes and nurse cells results in irregular distribution of chromatin to the nuclear periphery disrupting karyosome morphology. Simultaneous RNAi-mediated knockdown of nucleoporin Nup154 restores normal karyosome formation.</text>
</comment>
<comment type="similarity">
    <text evidence="7">Belongs to the nucleoporin NSP1/NUP62 family.</text>
</comment>
<proteinExistence type="evidence at protein level"/>
<feature type="chain" id="PRO_0000439767" description="Nuclear pore glycoprotein p62">
    <location>
        <begin position="1"/>
        <end position="394"/>
    </location>
</feature>
<feature type="repeat" description="1" evidence="7">
    <location>
        <begin position="22"/>
        <end position="23"/>
    </location>
</feature>
<feature type="repeat" description="2" evidence="7">
    <location>
        <begin position="50"/>
        <end position="51"/>
    </location>
</feature>
<feature type="repeat" description="3" evidence="7">
    <location>
        <begin position="75"/>
        <end position="76"/>
    </location>
</feature>
<feature type="repeat" description="4" evidence="7">
    <location>
        <begin position="77"/>
        <end position="78"/>
    </location>
</feature>
<feature type="repeat" description="5" evidence="7">
    <location>
        <begin position="116"/>
        <end position="117"/>
    </location>
</feature>
<feature type="region of interest" description="5 X 2 AA repeats of F-G" evidence="7">
    <location>
        <begin position="22"/>
        <end position="117"/>
    </location>
</feature>
<feature type="region of interest" description="Disordered" evidence="3">
    <location>
        <begin position="45"/>
        <end position="73"/>
    </location>
</feature>
<feature type="coiled-coil region" evidence="2">
    <location>
        <begin position="211"/>
        <end position="341"/>
    </location>
</feature>
<feature type="compositionally biased region" description="Low complexity" evidence="3">
    <location>
        <begin position="45"/>
        <end position="57"/>
    </location>
</feature>
<gene>
    <name evidence="9" type="primary">Nup62</name>
    <name evidence="9" type="ORF">CG6251</name>
</gene>
<dbReference type="EMBL" id="AE013599">
    <property type="protein sequence ID" value="AAF58007.1"/>
    <property type="molecule type" value="Genomic_DNA"/>
</dbReference>
<dbReference type="EMBL" id="AE013599">
    <property type="protein sequence ID" value="AHN56285.1"/>
    <property type="molecule type" value="Genomic_DNA"/>
</dbReference>
<dbReference type="EMBL" id="AY094707">
    <property type="protein sequence ID" value="AAM11060.1"/>
    <property type="molecule type" value="mRNA"/>
</dbReference>
<dbReference type="RefSeq" id="NP_001286489.1">
    <property type="nucleotide sequence ID" value="NM_001299560.1"/>
</dbReference>
<dbReference type="RefSeq" id="NP_611120.1">
    <property type="nucleotide sequence ID" value="NM_137276.2"/>
</dbReference>
<dbReference type="SMR" id="Q7JXF5"/>
<dbReference type="ComplexPortal" id="CPX-2568">
    <property type="entry name" value="Nuclear pore complex"/>
</dbReference>
<dbReference type="FunCoup" id="Q7JXF5">
    <property type="interactions" value="188"/>
</dbReference>
<dbReference type="IntAct" id="Q7JXF5">
    <property type="interactions" value="8"/>
</dbReference>
<dbReference type="MINT" id="Q7JXF5"/>
<dbReference type="STRING" id="7227.FBpp0086294"/>
<dbReference type="GlyGen" id="Q7JXF5">
    <property type="glycosylation" value="14 sites, 1 O-linked glycan (13 sites)"/>
</dbReference>
<dbReference type="PaxDb" id="7227-FBpp0086294"/>
<dbReference type="DNASU" id="36830"/>
<dbReference type="EnsemblMetazoa" id="FBtr0087150">
    <property type="protein sequence ID" value="FBpp0086294"/>
    <property type="gene ID" value="FBgn0034118"/>
</dbReference>
<dbReference type="EnsemblMetazoa" id="FBtr0340060">
    <property type="protein sequence ID" value="FBpp0309066"/>
    <property type="gene ID" value="FBgn0034118"/>
</dbReference>
<dbReference type="GeneID" id="36830"/>
<dbReference type="KEGG" id="dme:Dmel_CG6251"/>
<dbReference type="UCSC" id="CG6251-RA">
    <property type="organism name" value="d. melanogaster"/>
</dbReference>
<dbReference type="AGR" id="FB:FBgn0034118"/>
<dbReference type="CTD" id="23636"/>
<dbReference type="FlyBase" id="FBgn0034118">
    <property type="gene designation" value="Nup62"/>
</dbReference>
<dbReference type="VEuPathDB" id="VectorBase:FBgn0034118"/>
<dbReference type="eggNOG" id="KOG2196">
    <property type="taxonomic scope" value="Eukaryota"/>
</dbReference>
<dbReference type="GeneTree" id="ENSGT00940000167119"/>
<dbReference type="HOGENOM" id="CLU_025936_0_0_1"/>
<dbReference type="InParanoid" id="Q7JXF5"/>
<dbReference type="OMA" id="DIFRAPY"/>
<dbReference type="OrthoDB" id="344345at2759"/>
<dbReference type="PhylomeDB" id="Q7JXF5"/>
<dbReference type="Reactome" id="R-DME-159227">
    <property type="pathway name" value="Transport of the SLBP independent Mature mRNA"/>
</dbReference>
<dbReference type="Reactome" id="R-DME-159230">
    <property type="pathway name" value="Transport of the SLBP Dependant Mature mRNA"/>
</dbReference>
<dbReference type="Reactome" id="R-DME-159231">
    <property type="pathway name" value="Transport of Mature mRNA Derived from an Intronless Transcript"/>
</dbReference>
<dbReference type="Reactome" id="R-DME-159236">
    <property type="pathway name" value="Transport of Mature mRNA derived from an Intron-Containing Transcript"/>
</dbReference>
<dbReference type="Reactome" id="R-DME-3108214">
    <property type="pathway name" value="SUMOylation of DNA damage response and repair proteins"/>
</dbReference>
<dbReference type="Reactome" id="R-DME-3301854">
    <property type="pathway name" value="Nuclear Pore Complex (NPC) Disassembly"/>
</dbReference>
<dbReference type="Reactome" id="R-DME-4085377">
    <property type="pathway name" value="SUMOylation of SUMOylation proteins"/>
</dbReference>
<dbReference type="Reactome" id="R-DME-4551638">
    <property type="pathway name" value="SUMOylation of chromatin organization proteins"/>
</dbReference>
<dbReference type="Reactome" id="R-DME-4615885">
    <property type="pathway name" value="SUMOylation of DNA replication proteins"/>
</dbReference>
<dbReference type="Reactome" id="R-DME-5578749">
    <property type="pathway name" value="Transcriptional regulation by small RNAs"/>
</dbReference>
<dbReference type="BioGRID-ORCS" id="36830">
    <property type="hits" value="0 hits in 3 CRISPR screens"/>
</dbReference>
<dbReference type="GenomeRNAi" id="36830"/>
<dbReference type="PRO" id="PR:Q7JXF5"/>
<dbReference type="Proteomes" id="UP000000803">
    <property type="component" value="Chromosome 2R"/>
</dbReference>
<dbReference type="Bgee" id="FBgn0034118">
    <property type="expression patterns" value="Expressed in egg cell and 97 other cell types or tissues"/>
</dbReference>
<dbReference type="GO" id="GO:0005813">
    <property type="term" value="C:centrosome"/>
    <property type="evidence" value="ECO:0007669"/>
    <property type="project" value="UniProtKB-SubCell"/>
</dbReference>
<dbReference type="GO" id="GO:0000785">
    <property type="term" value="C:chromatin"/>
    <property type="evidence" value="ECO:0000315"/>
    <property type="project" value="UniProtKB"/>
</dbReference>
<dbReference type="GO" id="GO:0005737">
    <property type="term" value="C:cytoplasm"/>
    <property type="evidence" value="ECO:0007669"/>
    <property type="project" value="UniProtKB-KW"/>
</dbReference>
<dbReference type="GO" id="GO:0005635">
    <property type="term" value="C:nuclear envelope"/>
    <property type="evidence" value="ECO:0000314"/>
    <property type="project" value="UniProtKB"/>
</dbReference>
<dbReference type="GO" id="GO:0044613">
    <property type="term" value="C:nuclear pore central transport channel"/>
    <property type="evidence" value="ECO:0000250"/>
    <property type="project" value="FlyBase"/>
</dbReference>
<dbReference type="GO" id="GO:0000922">
    <property type="term" value="C:spindle pole"/>
    <property type="evidence" value="ECO:0007669"/>
    <property type="project" value="UniProtKB-SubCell"/>
</dbReference>
<dbReference type="GO" id="GO:0031490">
    <property type="term" value="F:chromatin DNA binding"/>
    <property type="evidence" value="ECO:0000315"/>
    <property type="project" value="UniProtKB"/>
</dbReference>
<dbReference type="GO" id="GO:0005543">
    <property type="term" value="F:phospholipid binding"/>
    <property type="evidence" value="ECO:0000318"/>
    <property type="project" value="GO_Central"/>
</dbReference>
<dbReference type="GO" id="GO:0017056">
    <property type="term" value="F:structural constituent of nuclear pore"/>
    <property type="evidence" value="ECO:0000250"/>
    <property type="project" value="FlyBase"/>
</dbReference>
<dbReference type="GO" id="GO:0097240">
    <property type="term" value="P:chromosome attachment to the nuclear envelope"/>
    <property type="evidence" value="ECO:0000315"/>
    <property type="project" value="UniProtKB"/>
</dbReference>
<dbReference type="GO" id="GO:0051028">
    <property type="term" value="P:mRNA transport"/>
    <property type="evidence" value="ECO:0007669"/>
    <property type="project" value="UniProtKB-KW"/>
</dbReference>
<dbReference type="GO" id="GO:0030717">
    <property type="term" value="P:oocyte karyosome formation"/>
    <property type="evidence" value="ECO:0000315"/>
    <property type="project" value="UniProtKB"/>
</dbReference>
<dbReference type="GO" id="GO:0006606">
    <property type="term" value="P:protein import into nucleus"/>
    <property type="evidence" value="ECO:0000318"/>
    <property type="project" value="GO_Central"/>
</dbReference>
<dbReference type="GO" id="GO:0097298">
    <property type="term" value="P:regulation of nucleus size"/>
    <property type="evidence" value="ECO:0000315"/>
    <property type="project" value="UniProtKB"/>
</dbReference>
<dbReference type="GO" id="GO:0006405">
    <property type="term" value="P:RNA export from nucleus"/>
    <property type="evidence" value="ECO:0000318"/>
    <property type="project" value="GO_Central"/>
</dbReference>
<dbReference type="FunFam" id="1.20.5.170:FF:000040">
    <property type="entry name" value="Nuclear pore glycoprotein p62"/>
    <property type="match status" value="1"/>
</dbReference>
<dbReference type="Gene3D" id="1.20.5.170">
    <property type="match status" value="1"/>
</dbReference>
<dbReference type="InterPro" id="IPR026010">
    <property type="entry name" value="NSP1/NUP62"/>
</dbReference>
<dbReference type="InterPro" id="IPR007758">
    <property type="entry name" value="Nucleoporin_NSP1_C"/>
</dbReference>
<dbReference type="PANTHER" id="PTHR12084:SF0">
    <property type="entry name" value="NUCLEAR PORE GLYCOPROTEIN P62"/>
    <property type="match status" value="1"/>
</dbReference>
<dbReference type="PANTHER" id="PTHR12084">
    <property type="entry name" value="NUCLEAR PORE GLYCOPROTEIN P62-RELATED"/>
    <property type="match status" value="1"/>
</dbReference>
<dbReference type="Pfam" id="PF05064">
    <property type="entry name" value="Nsp1_C"/>
    <property type="match status" value="1"/>
</dbReference>
<reference evidence="10" key="1">
    <citation type="journal article" date="2000" name="Science">
        <title>The genome sequence of Drosophila melanogaster.</title>
        <authorList>
            <person name="Adams M.D."/>
            <person name="Celniker S.E."/>
            <person name="Holt R.A."/>
            <person name="Evans C.A."/>
            <person name="Gocayne J.D."/>
            <person name="Amanatides P.G."/>
            <person name="Scherer S.E."/>
            <person name="Li P.W."/>
            <person name="Hoskins R.A."/>
            <person name="Galle R.F."/>
            <person name="George R.A."/>
            <person name="Lewis S.E."/>
            <person name="Richards S."/>
            <person name="Ashburner M."/>
            <person name="Henderson S.N."/>
            <person name="Sutton G.G."/>
            <person name="Wortman J.R."/>
            <person name="Yandell M.D."/>
            <person name="Zhang Q."/>
            <person name="Chen L.X."/>
            <person name="Brandon R.C."/>
            <person name="Rogers Y.-H.C."/>
            <person name="Blazej R.G."/>
            <person name="Champe M."/>
            <person name="Pfeiffer B.D."/>
            <person name="Wan K.H."/>
            <person name="Doyle C."/>
            <person name="Baxter E.G."/>
            <person name="Helt G."/>
            <person name="Nelson C.R."/>
            <person name="Miklos G.L.G."/>
            <person name="Abril J.F."/>
            <person name="Agbayani A."/>
            <person name="An H.-J."/>
            <person name="Andrews-Pfannkoch C."/>
            <person name="Baldwin D."/>
            <person name="Ballew R.M."/>
            <person name="Basu A."/>
            <person name="Baxendale J."/>
            <person name="Bayraktaroglu L."/>
            <person name="Beasley E.M."/>
            <person name="Beeson K.Y."/>
            <person name="Benos P.V."/>
            <person name="Berman B.P."/>
            <person name="Bhandari D."/>
            <person name="Bolshakov S."/>
            <person name="Borkova D."/>
            <person name="Botchan M.R."/>
            <person name="Bouck J."/>
            <person name="Brokstein P."/>
            <person name="Brottier P."/>
            <person name="Burtis K.C."/>
            <person name="Busam D.A."/>
            <person name="Butler H."/>
            <person name="Cadieu E."/>
            <person name="Center A."/>
            <person name="Chandra I."/>
            <person name="Cherry J.M."/>
            <person name="Cawley S."/>
            <person name="Dahlke C."/>
            <person name="Davenport L.B."/>
            <person name="Davies P."/>
            <person name="de Pablos B."/>
            <person name="Delcher A."/>
            <person name="Deng Z."/>
            <person name="Mays A.D."/>
            <person name="Dew I."/>
            <person name="Dietz S.M."/>
            <person name="Dodson K."/>
            <person name="Doup L.E."/>
            <person name="Downes M."/>
            <person name="Dugan-Rocha S."/>
            <person name="Dunkov B.C."/>
            <person name="Dunn P."/>
            <person name="Durbin K.J."/>
            <person name="Evangelista C.C."/>
            <person name="Ferraz C."/>
            <person name="Ferriera S."/>
            <person name="Fleischmann W."/>
            <person name="Fosler C."/>
            <person name="Gabrielian A.E."/>
            <person name="Garg N.S."/>
            <person name="Gelbart W.M."/>
            <person name="Glasser K."/>
            <person name="Glodek A."/>
            <person name="Gong F."/>
            <person name="Gorrell J.H."/>
            <person name="Gu Z."/>
            <person name="Guan P."/>
            <person name="Harris M."/>
            <person name="Harris N.L."/>
            <person name="Harvey D.A."/>
            <person name="Heiman T.J."/>
            <person name="Hernandez J.R."/>
            <person name="Houck J."/>
            <person name="Hostin D."/>
            <person name="Houston K.A."/>
            <person name="Howland T.J."/>
            <person name="Wei M.-H."/>
            <person name="Ibegwam C."/>
            <person name="Jalali M."/>
            <person name="Kalush F."/>
            <person name="Karpen G.H."/>
            <person name="Ke Z."/>
            <person name="Kennison J.A."/>
            <person name="Ketchum K.A."/>
            <person name="Kimmel B.E."/>
            <person name="Kodira C.D."/>
            <person name="Kraft C.L."/>
            <person name="Kravitz S."/>
            <person name="Kulp D."/>
            <person name="Lai Z."/>
            <person name="Lasko P."/>
            <person name="Lei Y."/>
            <person name="Levitsky A.A."/>
            <person name="Li J.H."/>
            <person name="Li Z."/>
            <person name="Liang Y."/>
            <person name="Lin X."/>
            <person name="Liu X."/>
            <person name="Mattei B."/>
            <person name="McIntosh T.C."/>
            <person name="McLeod M.P."/>
            <person name="McPherson D."/>
            <person name="Merkulov G."/>
            <person name="Milshina N.V."/>
            <person name="Mobarry C."/>
            <person name="Morris J."/>
            <person name="Moshrefi A."/>
            <person name="Mount S.M."/>
            <person name="Moy M."/>
            <person name="Murphy B."/>
            <person name="Murphy L."/>
            <person name="Muzny D.M."/>
            <person name="Nelson D.L."/>
            <person name="Nelson D.R."/>
            <person name="Nelson K.A."/>
            <person name="Nixon K."/>
            <person name="Nusskern D.R."/>
            <person name="Pacleb J.M."/>
            <person name="Palazzolo M."/>
            <person name="Pittman G.S."/>
            <person name="Pan S."/>
            <person name="Pollard J."/>
            <person name="Puri V."/>
            <person name="Reese M.G."/>
            <person name="Reinert K."/>
            <person name="Remington K."/>
            <person name="Saunders R.D.C."/>
            <person name="Scheeler F."/>
            <person name="Shen H."/>
            <person name="Shue B.C."/>
            <person name="Siden-Kiamos I."/>
            <person name="Simpson M."/>
            <person name="Skupski M.P."/>
            <person name="Smith T.J."/>
            <person name="Spier E."/>
            <person name="Spradling A.C."/>
            <person name="Stapleton M."/>
            <person name="Strong R."/>
            <person name="Sun E."/>
            <person name="Svirskas R."/>
            <person name="Tector C."/>
            <person name="Turner R."/>
            <person name="Venter E."/>
            <person name="Wang A.H."/>
            <person name="Wang X."/>
            <person name="Wang Z.-Y."/>
            <person name="Wassarman D.A."/>
            <person name="Weinstock G.M."/>
            <person name="Weissenbach J."/>
            <person name="Williams S.M."/>
            <person name="Woodage T."/>
            <person name="Worley K.C."/>
            <person name="Wu D."/>
            <person name="Yang S."/>
            <person name="Yao Q.A."/>
            <person name="Ye J."/>
            <person name="Yeh R.-F."/>
            <person name="Zaveri J.S."/>
            <person name="Zhan M."/>
            <person name="Zhang G."/>
            <person name="Zhao Q."/>
            <person name="Zheng L."/>
            <person name="Zheng X.H."/>
            <person name="Zhong F.N."/>
            <person name="Zhong W."/>
            <person name="Zhou X."/>
            <person name="Zhu S.C."/>
            <person name="Zhu X."/>
            <person name="Smith H.O."/>
            <person name="Gibbs R.A."/>
            <person name="Myers E.W."/>
            <person name="Rubin G.M."/>
            <person name="Venter J.C."/>
        </authorList>
    </citation>
    <scope>NUCLEOTIDE SEQUENCE [LARGE SCALE GENOMIC DNA]</scope>
    <source>
        <strain evidence="10">Berkeley</strain>
    </source>
</reference>
<reference evidence="10" key="2">
    <citation type="journal article" date="2002" name="Genome Biol.">
        <title>Annotation of the Drosophila melanogaster euchromatic genome: a systematic review.</title>
        <authorList>
            <person name="Misra S."/>
            <person name="Crosby M.A."/>
            <person name="Mungall C.J."/>
            <person name="Matthews B.B."/>
            <person name="Campbell K.S."/>
            <person name="Hradecky P."/>
            <person name="Huang Y."/>
            <person name="Kaminker J.S."/>
            <person name="Millburn G.H."/>
            <person name="Prochnik S.E."/>
            <person name="Smith C.D."/>
            <person name="Tupy J.L."/>
            <person name="Whitfield E.J."/>
            <person name="Bayraktaroglu L."/>
            <person name="Berman B.P."/>
            <person name="Bettencourt B.R."/>
            <person name="Celniker S.E."/>
            <person name="de Grey A.D.N.J."/>
            <person name="Drysdale R.A."/>
            <person name="Harris N.L."/>
            <person name="Richter J."/>
            <person name="Russo S."/>
            <person name="Schroeder A.J."/>
            <person name="Shu S.Q."/>
            <person name="Stapleton M."/>
            <person name="Yamada C."/>
            <person name="Ashburner M."/>
            <person name="Gelbart W.M."/>
            <person name="Rubin G.M."/>
            <person name="Lewis S.E."/>
        </authorList>
    </citation>
    <scope>GENOME REANNOTATION</scope>
    <source>
        <strain evidence="10">Berkeley</strain>
    </source>
</reference>
<reference evidence="8" key="3">
    <citation type="journal article" date="2002" name="Genome Biol.">
        <title>A Drosophila full-length cDNA resource.</title>
        <authorList>
            <person name="Stapleton M."/>
            <person name="Carlson J.W."/>
            <person name="Brokstein P."/>
            <person name="Yu C."/>
            <person name="Champe M."/>
            <person name="George R.A."/>
            <person name="Guarin H."/>
            <person name="Kronmiller B."/>
            <person name="Pacleb J.M."/>
            <person name="Park S."/>
            <person name="Wan K.H."/>
            <person name="Rubin G.M."/>
            <person name="Celniker S.E."/>
        </authorList>
    </citation>
    <scope>NUCLEOTIDE SEQUENCE [LARGE SCALE MRNA]</scope>
    <source>
        <strain evidence="8">Berkeley</strain>
        <tissue evidence="8">Head</tissue>
    </source>
</reference>
<reference key="4">
    <citation type="journal article" date="1995" name="Eur. J. Cell Biol.">
        <title>Drosophila gp210, an invertebrate nuclear pore complex glycoprotein.</title>
        <authorList>
            <person name="Berrios M."/>
            <person name="Meller V.H."/>
            <person name="McConnell M."/>
            <person name="Fisher P.A."/>
        </authorList>
    </citation>
    <scope>SUBCELLULAR LOCATION</scope>
    <scope>TISSUE SPECIFICITY</scope>
</reference>
<reference evidence="7" key="5">
    <citation type="journal article" date="2010" name="Cell">
        <title>Nucleoporins directly stimulate expression of developmental and cell-cycle genes inside the nucleoplasm.</title>
        <authorList>
            <person name="Kalverda B."/>
            <person name="Pickersgill H."/>
            <person name="Shloma V.V."/>
            <person name="Fornerod M."/>
        </authorList>
    </citation>
    <scope>FUNCTION</scope>
    <scope>SUBCELLULAR LOCATION</scope>
</reference>
<reference evidence="7" key="6">
    <citation type="journal article" date="2015" name="Genes Dev.">
        <title>A negative loop within the nuclear pore complex controls global chromatin organization.</title>
        <authorList>
            <person name="Breuer M."/>
            <person name="Ohkura H."/>
        </authorList>
    </citation>
    <scope>FUNCTION</scope>
    <scope>SUBCELLULAR LOCATION</scope>
    <scope>DISRUPTION PHENOTYPE</scope>
</reference>
<organism evidence="10">
    <name type="scientific">Drosophila melanogaster</name>
    <name type="common">Fruit fly</name>
    <dbReference type="NCBI Taxonomy" id="7227"/>
    <lineage>
        <taxon>Eukaryota</taxon>
        <taxon>Metazoa</taxon>
        <taxon>Ecdysozoa</taxon>
        <taxon>Arthropoda</taxon>
        <taxon>Hexapoda</taxon>
        <taxon>Insecta</taxon>
        <taxon>Pterygota</taxon>
        <taxon>Neoptera</taxon>
        <taxon>Endopterygota</taxon>
        <taxon>Diptera</taxon>
        <taxon>Brachycera</taxon>
        <taxon>Muscomorpha</taxon>
        <taxon>Ephydroidea</taxon>
        <taxon>Drosophilidae</taxon>
        <taxon>Drosophila</taxon>
        <taxon>Sophophora</taxon>
    </lineage>
</organism>
<accession>Q7JXF5</accession>
<keyword id="KW-0158">Chromosome</keyword>
<keyword id="KW-0175">Coiled coil</keyword>
<keyword id="KW-0963">Cytoplasm</keyword>
<keyword id="KW-0206">Cytoskeleton</keyword>
<keyword id="KW-0509">mRNA transport</keyword>
<keyword id="KW-0906">Nuclear pore complex</keyword>
<keyword id="KW-0539">Nucleus</keyword>
<keyword id="KW-0653">Protein transport</keyword>
<keyword id="KW-1185">Reference proteome</keyword>
<keyword id="KW-0677">Repeat</keyword>
<keyword id="KW-0811">Translocation</keyword>
<keyword id="KW-0813">Transport</keyword>
<evidence type="ECO:0000250" key="1">
    <source>
        <dbReference type="UniProtKB" id="P37198"/>
    </source>
</evidence>
<evidence type="ECO:0000255" key="2"/>
<evidence type="ECO:0000256" key="3">
    <source>
        <dbReference type="SAM" id="MobiDB-lite"/>
    </source>
</evidence>
<evidence type="ECO:0000269" key="4">
    <source>
    </source>
</evidence>
<evidence type="ECO:0000269" key="5">
    <source>
    </source>
</evidence>
<evidence type="ECO:0000269" key="6">
    <source>
    </source>
</evidence>
<evidence type="ECO:0000305" key="7"/>
<evidence type="ECO:0000312" key="8">
    <source>
        <dbReference type="EMBL" id="AAM11060.1"/>
    </source>
</evidence>
<evidence type="ECO:0000312" key="9">
    <source>
        <dbReference type="FlyBase" id="FBgn0034118"/>
    </source>
</evidence>
<evidence type="ECO:0000312" key="10">
    <source>
        <dbReference type="Proteomes" id="UP000000803"/>
    </source>
</evidence>
<protein>
    <recommendedName>
        <fullName evidence="7">Nuclear pore glycoprotein p62</fullName>
    </recommendedName>
    <alternativeName>
        <fullName evidence="9">62 kDa nucleoporin</fullName>
    </alternativeName>
</protein>
<sequence length="394" mass="40684">MVFQLPTTTAAPTGGATSSFSFGLSTGTPAAAPASGAATTAPATKTTFSFGTPAPTAGIGGGDADNSKAQAPPAFGFGLGSGTASAPLTLGTQAAANPASTTSATATGTSAAPPAFGGFTAQPAASVVPTIATSAPNTAATTTGLLGGSGLGAPKTTAAASTTLTAAPSAIASTQGAAPAPTLSTGGAFANLTTETKTTDSSAVSTASQLSYHQLEEHINKWTLEFEEQEKVFTEQATQINAWDKLLISNNGKIVELNDAVKKVKTDQQVLDQELEFIATQQKELEDSLGPLEKEFVNLPRVDMERSQTYLMVENLDTQLKQMSEDLKEIIDNLNEANKGQDTTDPIIQIGKILNAHMNSLQWIESQSTNISKKLEDIGKIQDSQKRDIFRAPF</sequence>
<name>NUP62_DROME</name>